<name>YOBD_ECODH</name>
<reference key="1">
    <citation type="journal article" date="2008" name="J. Bacteriol.">
        <title>The complete genome sequence of Escherichia coli DH10B: insights into the biology of a laboratory workhorse.</title>
        <authorList>
            <person name="Durfee T."/>
            <person name="Nelson R."/>
            <person name="Baldwin S."/>
            <person name="Plunkett G. III"/>
            <person name="Burland V."/>
            <person name="Mau B."/>
            <person name="Petrosino J.F."/>
            <person name="Qin X."/>
            <person name="Muzny D.M."/>
            <person name="Ayele M."/>
            <person name="Gibbs R.A."/>
            <person name="Csorgo B."/>
            <person name="Posfai G."/>
            <person name="Weinstock G.M."/>
            <person name="Blattner F.R."/>
        </authorList>
    </citation>
    <scope>NUCLEOTIDE SEQUENCE [LARGE SCALE GENOMIC DNA]</scope>
    <source>
        <strain>K12 / DH10B</strain>
    </source>
</reference>
<evidence type="ECO:0000255" key="1">
    <source>
        <dbReference type="HAMAP-Rule" id="MF_01071"/>
    </source>
</evidence>
<keyword id="KW-0997">Cell inner membrane</keyword>
<keyword id="KW-1003">Cell membrane</keyword>
<keyword id="KW-0472">Membrane</keyword>
<keyword id="KW-0812">Transmembrane</keyword>
<keyword id="KW-1133">Transmembrane helix</keyword>
<proteinExistence type="inferred from homology"/>
<feature type="chain" id="PRO_1000136639" description="UPF0266 membrane protein YobD">
    <location>
        <begin position="1"/>
        <end position="152"/>
    </location>
</feature>
<feature type="transmembrane region" description="Helical" evidence="1">
    <location>
        <begin position="6"/>
        <end position="26"/>
    </location>
</feature>
<feature type="transmembrane region" description="Helical" evidence="1">
    <location>
        <begin position="45"/>
        <end position="65"/>
    </location>
</feature>
<feature type="transmembrane region" description="Helical" evidence="1">
    <location>
        <begin position="67"/>
        <end position="87"/>
    </location>
</feature>
<protein>
    <recommendedName>
        <fullName evidence="1">UPF0266 membrane protein YobD</fullName>
    </recommendedName>
</protein>
<sequence>MTITDLVLILFIAALLAFAIYDQFIMPRRNGPTLLAIPLLRRGRIDSVIFVGLIVILIYNNVTNHGALITTWLLSALALMGFYIFWIRVPKIIFKQKGFFFANVWIEYSRIKAMNLSEDGVLVMQLEQRRLLIRVRNIDDLEKIYKLLVSTQ</sequence>
<accession>B1XH87</accession>
<comment type="subcellular location">
    <subcellularLocation>
        <location evidence="1">Cell inner membrane</location>
        <topology evidence="1">Multi-pass membrane protein</topology>
    </subcellularLocation>
</comment>
<comment type="similarity">
    <text evidence="1">Belongs to the UPF0266 family.</text>
</comment>
<dbReference type="EMBL" id="CP000948">
    <property type="protein sequence ID" value="ACB03017.1"/>
    <property type="molecule type" value="Genomic_DNA"/>
</dbReference>
<dbReference type="RefSeq" id="WP_000156255.1">
    <property type="nucleotide sequence ID" value="NC_010473.1"/>
</dbReference>
<dbReference type="KEGG" id="ecd:ECDH10B_1958"/>
<dbReference type="HOGENOM" id="CLU_133645_0_0_6"/>
<dbReference type="GO" id="GO:0005886">
    <property type="term" value="C:plasma membrane"/>
    <property type="evidence" value="ECO:0007669"/>
    <property type="project" value="UniProtKB-SubCell"/>
</dbReference>
<dbReference type="HAMAP" id="MF_01071">
    <property type="entry name" value="UPF0266"/>
    <property type="match status" value="1"/>
</dbReference>
<dbReference type="InterPro" id="IPR009328">
    <property type="entry name" value="DUF986"/>
</dbReference>
<dbReference type="NCBIfam" id="NF002791">
    <property type="entry name" value="PRK02913.1"/>
    <property type="match status" value="1"/>
</dbReference>
<dbReference type="Pfam" id="PF06173">
    <property type="entry name" value="DUF986"/>
    <property type="match status" value="1"/>
</dbReference>
<dbReference type="PIRSF" id="PIRSF020687">
    <property type="entry name" value="UCP020687"/>
    <property type="match status" value="1"/>
</dbReference>
<organism>
    <name type="scientific">Escherichia coli (strain K12 / DH10B)</name>
    <dbReference type="NCBI Taxonomy" id="316385"/>
    <lineage>
        <taxon>Bacteria</taxon>
        <taxon>Pseudomonadati</taxon>
        <taxon>Pseudomonadota</taxon>
        <taxon>Gammaproteobacteria</taxon>
        <taxon>Enterobacterales</taxon>
        <taxon>Enterobacteriaceae</taxon>
        <taxon>Escherichia</taxon>
    </lineage>
</organism>
<gene>
    <name evidence="1" type="primary">yobD</name>
    <name type="ordered locus">ECDH10B_1958</name>
</gene>